<keyword id="KW-0240">DNA-directed RNA polymerase</keyword>
<keyword id="KW-0244">Early protein</keyword>
<keyword id="KW-0548">Nucleotidyltransferase</keyword>
<keyword id="KW-1185">Reference proteome</keyword>
<keyword id="KW-0804">Transcription</keyword>
<keyword id="KW-0808">Transferase</keyword>
<keyword id="KW-0946">Virion</keyword>
<organismHost>
    <name type="scientific">Vertebrata</name>
    <dbReference type="NCBI Taxonomy" id="7742"/>
</organismHost>
<organism>
    <name type="scientific">Fowlpox virus (strain NVSL)</name>
    <name type="common">FPV</name>
    <dbReference type="NCBI Taxonomy" id="928301"/>
    <lineage>
        <taxon>Viruses</taxon>
        <taxon>Varidnaviria</taxon>
        <taxon>Bamfordvirae</taxon>
        <taxon>Nucleocytoviricota</taxon>
        <taxon>Pokkesviricetes</taxon>
        <taxon>Chitovirales</taxon>
        <taxon>Poxviridae</taxon>
        <taxon>Chordopoxvirinae</taxon>
        <taxon>Avipoxvirus</taxon>
        <taxon>Fowlpox virus</taxon>
    </lineage>
</organism>
<comment type="function">
    <text evidence="1">Part of the DNA-dependent RNA polymerase which catalyzes the transcription of viral DNA into RNA using the four ribonucleoside triphosphates as substrates. Responsible for the transcription of early, intermediate and late genes. DNA-dependent RNA polymerase associates with the early transcription factor (ETF) thereby allowing the early genes transcription. Late transcription, and probably also intermediate transcription, require newly synthesized RNA polymerase (By similarity).</text>
</comment>
<comment type="catalytic activity">
    <reaction>
        <text>RNA(n) + a ribonucleoside 5'-triphosphate = RNA(n+1) + diphosphate</text>
        <dbReference type="Rhea" id="RHEA:21248"/>
        <dbReference type="Rhea" id="RHEA-COMP:14527"/>
        <dbReference type="Rhea" id="RHEA-COMP:17342"/>
        <dbReference type="ChEBI" id="CHEBI:33019"/>
        <dbReference type="ChEBI" id="CHEBI:61557"/>
        <dbReference type="ChEBI" id="CHEBI:140395"/>
        <dbReference type="EC" id="2.7.7.6"/>
    </reaction>
</comment>
<comment type="subunit">
    <text evidence="1">The DNA-dependent RNA polymerase used for intermediate and late genes expression consists of eight subunits (147) kDa, 133 kDa, 35 kDa, 30 kDa, 22 kDa, 19 kDa, 18 kDa and 7 kDa totalling more than 500 kDa in mass. The same holoenzyme, with the addition of the transcription-specificity factor RAP94, is used for early gene expression (By similarity).</text>
</comment>
<comment type="subcellular location">
    <subcellularLocation>
        <location evidence="3">Virion</location>
    </subcellularLocation>
    <text evidence="1">All the enzymes and other proteins required to synthesize early mRNAs are packaged within the virion core along with the DNA genome. This is necessary because viral early mRNAs are synthesized within minutes after virus entry into the cell and are extruded through pores in the core particle (By similarity).</text>
</comment>
<comment type="induction">
    <text>Expressed in the early phase of the viral replicative cycle. Expression seems to continue throughout virus infection.</text>
</comment>
<comment type="similarity">
    <text evidence="3">Belongs to the poxviridae DNA-directed RNA polymerase 19 kDa subunit family.</text>
</comment>
<reference key="1">
    <citation type="journal article" date="1990" name="Virus Res.">
        <title>Mapping of a major early/late gene of fowlpox virus.</title>
        <authorList>
            <person name="Kumar S."/>
            <person name="Boyle D.B."/>
        </authorList>
    </citation>
    <scope>NUCLEOTIDE SEQUENCE [GENOMIC DNA]</scope>
</reference>
<reference key="2">
    <citation type="journal article" date="2000" name="J. Virol.">
        <title>The genome of fowlpox virus.</title>
        <authorList>
            <person name="Afonso C.L."/>
            <person name="Tulman E.R."/>
            <person name="Lu Z."/>
            <person name="Zsak L."/>
            <person name="Kutish G.F."/>
            <person name="Rock D.L."/>
        </authorList>
    </citation>
    <scope>NUCLEOTIDE SEQUENCE [LARGE SCALE GENOMIC DNA]</scope>
</reference>
<reference key="3">
    <citation type="journal article" date="1998" name="J. Virol.">
        <title>The 131-amino-acid repeat region of the essential 39-kilodalton core protein of fowlpox virus FP9, equivalent to vaccinia virus A4L protein, is nonessential and highly immunogenic.</title>
        <authorList>
            <person name="Boulanger D."/>
            <person name="Green P."/>
            <person name="Smith T."/>
            <person name="Czerny C.P."/>
            <person name="Skinner M.A."/>
        </authorList>
    </citation>
    <scope>NUCLEOTIDE SEQUENCE [GENOMIC DNA] OF 1-97</scope>
    <source>
        <strain>FP-9 / Isolate HP-440</strain>
    </source>
</reference>
<dbReference type="EC" id="2.7.7.6"/>
<dbReference type="EMBL" id="X52461">
    <property type="protein sequence ID" value="CAA36694.1"/>
    <property type="molecule type" value="Genomic_DNA"/>
</dbReference>
<dbReference type="EMBL" id="AF198100">
    <property type="protein sequence ID" value="AAF44513.1"/>
    <property type="molecule type" value="Genomic_DNA"/>
</dbReference>
<dbReference type="EMBL" id="AJ005164">
    <property type="protein sequence ID" value="CAA06407.1"/>
    <property type="molecule type" value="Genomic_DNA"/>
</dbReference>
<dbReference type="PIR" id="A60013">
    <property type="entry name" value="A60013"/>
</dbReference>
<dbReference type="RefSeq" id="NP_039132.1">
    <property type="nucleotide sequence ID" value="NC_002188.1"/>
</dbReference>
<dbReference type="SMR" id="Q05569"/>
<dbReference type="GeneID" id="1486717"/>
<dbReference type="KEGG" id="vg:1486717"/>
<dbReference type="Proteomes" id="UP000008597">
    <property type="component" value="Segment"/>
</dbReference>
<dbReference type="GO" id="GO:0000428">
    <property type="term" value="C:DNA-directed RNA polymerase complex"/>
    <property type="evidence" value="ECO:0007669"/>
    <property type="project" value="UniProtKB-KW"/>
</dbReference>
<dbReference type="GO" id="GO:0044423">
    <property type="term" value="C:virion component"/>
    <property type="evidence" value="ECO:0007669"/>
    <property type="project" value="UniProtKB-KW"/>
</dbReference>
<dbReference type="GO" id="GO:0003677">
    <property type="term" value="F:DNA binding"/>
    <property type="evidence" value="ECO:0007669"/>
    <property type="project" value="InterPro"/>
</dbReference>
<dbReference type="GO" id="GO:0003899">
    <property type="term" value="F:DNA-directed RNA polymerase activity"/>
    <property type="evidence" value="ECO:0007669"/>
    <property type="project" value="UniProtKB-EC"/>
</dbReference>
<dbReference type="GO" id="GO:0006351">
    <property type="term" value="P:DNA-templated transcription"/>
    <property type="evidence" value="ECO:0007669"/>
    <property type="project" value="InterPro"/>
</dbReference>
<dbReference type="InterPro" id="IPR007984">
    <property type="entry name" value="DNA-dir_RNA_Pol_19kDa_poxvir"/>
</dbReference>
<dbReference type="Pfam" id="PF05320">
    <property type="entry name" value="Pox_RNA_Pol_19"/>
    <property type="match status" value="1"/>
</dbReference>
<dbReference type="PIRSF" id="PIRSF000743">
    <property type="entry name" value="RPO19"/>
    <property type="match status" value="1"/>
</dbReference>
<sequence>MDNSMDINDILLSDDNDYKSYDEDDDSISDIGETSDDCCTTKQSDSRIESFKFDETTQSPHPKQLSERIKAIKQRYTRRISLFEITGILSESYNLLQRGRIPLLNDLTEETFKDSIINIMFKEIEQGNCPIVIQKNGELLSLTDFDKKGVQYHLDYIKTIWRNQRKL</sequence>
<protein>
    <recommendedName>
        <fullName>DNA-directed RNA polymerase 19 kDa subunit</fullName>
        <ecNumber>2.7.7.6</ecNumber>
    </recommendedName>
</protein>
<accession>Q05569</accession>
<accession>O93019</accession>
<gene>
    <name type="primary">RPO19</name>
    <name type="ordered locus">FPV169</name>
    <name type="ORF">FP-A5</name>
    <name type="ORF">FPA5</name>
</gene>
<proteinExistence type="evidence at transcript level"/>
<name>RP19_FOWPN</name>
<feature type="chain" id="PRO_0000099149" description="DNA-directed RNA polymerase 19 kDa subunit">
    <location>
        <begin position="1"/>
        <end position="167"/>
    </location>
</feature>
<feature type="region of interest" description="Disordered" evidence="2">
    <location>
        <begin position="15"/>
        <end position="41"/>
    </location>
</feature>
<feature type="compositionally biased region" description="Acidic residues" evidence="2">
    <location>
        <begin position="22"/>
        <end position="36"/>
    </location>
</feature>
<evidence type="ECO:0000250" key="1"/>
<evidence type="ECO:0000256" key="2">
    <source>
        <dbReference type="SAM" id="MobiDB-lite"/>
    </source>
</evidence>
<evidence type="ECO:0000305" key="3"/>